<organism>
    <name type="scientific">Escherichia coli O6:H1 (strain CFT073 / ATCC 700928 / UPEC)</name>
    <dbReference type="NCBI Taxonomy" id="199310"/>
    <lineage>
        <taxon>Bacteria</taxon>
        <taxon>Pseudomonadati</taxon>
        <taxon>Pseudomonadota</taxon>
        <taxon>Gammaproteobacteria</taxon>
        <taxon>Enterobacterales</taxon>
        <taxon>Enterobacteriaceae</taxon>
        <taxon>Escherichia</taxon>
    </lineage>
</organism>
<dbReference type="EMBL" id="AE014075">
    <property type="protein sequence ID" value="AAN83170.1"/>
    <property type="status" value="ALT_INIT"/>
    <property type="molecule type" value="Genomic_DNA"/>
</dbReference>
<dbReference type="RefSeq" id="WP_000947159.1">
    <property type="nucleotide sequence ID" value="NZ_CP051263.1"/>
</dbReference>
<dbReference type="SMR" id="P0ABI5"/>
<dbReference type="GeneID" id="93778125"/>
<dbReference type="KEGG" id="ecc:c4737"/>
<dbReference type="eggNOG" id="COG0598">
    <property type="taxonomic scope" value="Bacteria"/>
</dbReference>
<dbReference type="HOGENOM" id="CLU_007127_5_0_6"/>
<dbReference type="Proteomes" id="UP000001410">
    <property type="component" value="Chromosome"/>
</dbReference>
<dbReference type="GO" id="GO:0005886">
    <property type="term" value="C:plasma membrane"/>
    <property type="evidence" value="ECO:0007669"/>
    <property type="project" value="UniProtKB-SubCell"/>
</dbReference>
<dbReference type="GO" id="GO:0015087">
    <property type="term" value="F:cobalt ion transmembrane transporter activity"/>
    <property type="evidence" value="ECO:0007669"/>
    <property type="project" value="InterPro"/>
</dbReference>
<dbReference type="GO" id="GO:0015095">
    <property type="term" value="F:magnesium ion transmembrane transporter activity"/>
    <property type="evidence" value="ECO:0007669"/>
    <property type="project" value="InterPro"/>
</dbReference>
<dbReference type="GO" id="GO:0015099">
    <property type="term" value="F:nickel cation transmembrane transporter activity"/>
    <property type="evidence" value="ECO:0007669"/>
    <property type="project" value="TreeGrafter"/>
</dbReference>
<dbReference type="CDD" id="cd12835">
    <property type="entry name" value="EcCorA-like_1"/>
    <property type="match status" value="1"/>
</dbReference>
<dbReference type="FunFam" id="1.20.58.340:FF:000001">
    <property type="entry name" value="Magnesium transport protein CorA"/>
    <property type="match status" value="1"/>
</dbReference>
<dbReference type="Gene3D" id="1.20.58.340">
    <property type="entry name" value="Magnesium transport protein CorA, transmembrane region"/>
    <property type="match status" value="1"/>
</dbReference>
<dbReference type="InterPro" id="IPR045861">
    <property type="entry name" value="CorA_cytoplasmic_dom"/>
</dbReference>
<dbReference type="InterPro" id="IPR050829">
    <property type="entry name" value="CorA_MIT"/>
</dbReference>
<dbReference type="InterPro" id="IPR045863">
    <property type="entry name" value="CorA_TM1_TM2"/>
</dbReference>
<dbReference type="InterPro" id="IPR004488">
    <property type="entry name" value="Mg/Co-transport_prot_CorA"/>
</dbReference>
<dbReference type="InterPro" id="IPR002523">
    <property type="entry name" value="MgTranspt_CorA/ZnTranspt_ZntB"/>
</dbReference>
<dbReference type="NCBIfam" id="TIGR00383">
    <property type="entry name" value="corA"/>
    <property type="match status" value="1"/>
</dbReference>
<dbReference type="PANTHER" id="PTHR47685">
    <property type="entry name" value="MAGNESIUM TRANSPORT PROTEIN CORA"/>
    <property type="match status" value="1"/>
</dbReference>
<dbReference type="PANTHER" id="PTHR47685:SF1">
    <property type="entry name" value="MAGNESIUM TRANSPORT PROTEIN CORA"/>
    <property type="match status" value="1"/>
</dbReference>
<dbReference type="Pfam" id="PF01544">
    <property type="entry name" value="CorA"/>
    <property type="match status" value="1"/>
</dbReference>
<dbReference type="SUPFAM" id="SSF143865">
    <property type="entry name" value="CorA soluble domain-like"/>
    <property type="match status" value="1"/>
</dbReference>
<dbReference type="SUPFAM" id="SSF144083">
    <property type="entry name" value="Magnesium transport protein CorA, transmembrane region"/>
    <property type="match status" value="1"/>
</dbReference>
<sequence>MLSAFQLENNRLTRLEVEESQPLVNAVWIDLVEPDDDERLRVQSELGQSLATRPELEDIEASARFFEDDDGLHIHSFFFFEDAEDHAGNSTVAFTIRDGRLFTLRERELPAFRLYRMRARSQSMVDGNAYELLLDLFETKIEQLADEIENIYSDLEQLSRVIMEGHQGDEYDEALSTLAELEDIGWKVRLCLMDTQRALNFLVRKARLPGGQLEQAREILRDIESLLPHNESLFQKVNFLMQAAMGFINIEQNRIIKIFSVVSVVFLPPTLVASSYGMNFEFMPELKWSFGYPGAIIFMILAGLAPYLYFKRKNWL</sequence>
<proteinExistence type="inferred from homology"/>
<accession>P0ABI5</accession>
<accession>P27841</accession>
<comment type="function">
    <text evidence="1 2">Mediates influx of magnesium ions (By similarity). Alternates between open and closed states. Activated by low cytoplasmic Mg(2+) levels. Inactive when cytoplasmic Mg(2+) levels are high (By similarity).</text>
</comment>
<comment type="catalytic activity">
    <reaction evidence="1">
        <text>Mg(2+)(in) = Mg(2+)(out)</text>
        <dbReference type="Rhea" id="RHEA:29827"/>
        <dbReference type="ChEBI" id="CHEBI:18420"/>
    </reaction>
</comment>
<comment type="subunit">
    <text evidence="2">Homopentamer. In the absence of Mg(2+), interactions between subunits are weakened, and dimers, trimers and tetramers can be observed in vitro (By similarity).</text>
</comment>
<comment type="subcellular location">
    <subcellularLocation>
        <location evidence="1">Cell inner membrane</location>
        <topology evidence="2">Multi-pass membrane protein</topology>
    </subcellularLocation>
</comment>
<comment type="domain">
    <text evidence="2">The central ion permeation pathway is formed by the first transmembrane domain from each of the five subunits. Mg(2+) binding strengthens interactions between subunits and leads to the formation of a symmetrical homopentamer surrounding a closed ion permeation pathway. Low Mg(2+) concentrations trigger both a conformation change within each subunit and a loosening of the interactions between subunits. This results in an open ion conduction pathway. In addition, this results in a less symmetrical shape of the whole complex.</text>
</comment>
<comment type="similarity">
    <text evidence="4">Belongs to the CorA metal ion transporter (MIT) (TC 1.A.35) family.</text>
</comment>
<comment type="sequence caution" evidence="4">
    <conflict type="erroneous initiation">
        <sequence resource="EMBL-CDS" id="AAN83170"/>
    </conflict>
</comment>
<keyword id="KW-0997">Cell inner membrane</keyword>
<keyword id="KW-1003">Cell membrane</keyword>
<keyword id="KW-0406">Ion transport</keyword>
<keyword id="KW-0460">Magnesium</keyword>
<keyword id="KW-0472">Membrane</keyword>
<keyword id="KW-1185">Reference proteome</keyword>
<keyword id="KW-0812">Transmembrane</keyword>
<keyword id="KW-1133">Transmembrane helix</keyword>
<keyword id="KW-0813">Transport</keyword>
<name>CORA_ECOL6</name>
<protein>
    <recommendedName>
        <fullName>Magnesium transport protein CorA</fullName>
    </recommendedName>
</protein>
<feature type="chain" id="PRO_0000201529" description="Magnesium transport protein CorA">
    <location>
        <begin position="1"/>
        <end position="316"/>
    </location>
</feature>
<feature type="topological domain" description="Cytoplasmic" evidence="3">
    <location>
        <begin position="1"/>
        <end position="254"/>
    </location>
</feature>
<feature type="transmembrane region" description="Helical" evidence="3">
    <location>
        <begin position="255"/>
        <end position="273"/>
    </location>
</feature>
<feature type="topological domain" description="Periplasmic" evidence="3">
    <location>
        <begin position="274"/>
        <end position="287"/>
    </location>
</feature>
<feature type="transmembrane region" description="Helical" evidence="3">
    <location>
        <begin position="288"/>
        <end position="310"/>
    </location>
</feature>
<feature type="topological domain" description="Cytoplasmic" evidence="3">
    <location>
        <begin position="311"/>
        <end position="316"/>
    </location>
</feature>
<feature type="short sequence motif" description="Probable selectivity filter" evidence="2">
    <location>
        <begin position="277"/>
        <end position="279"/>
    </location>
</feature>
<feature type="site" description="Essential for ion permeation" evidence="2">
    <location>
        <position position="253"/>
    </location>
</feature>
<reference key="1">
    <citation type="journal article" date="2002" name="Proc. Natl. Acad. Sci. U.S.A.">
        <title>Extensive mosaic structure revealed by the complete genome sequence of uropathogenic Escherichia coli.</title>
        <authorList>
            <person name="Welch R.A."/>
            <person name="Burland V."/>
            <person name="Plunkett G. III"/>
            <person name="Redford P."/>
            <person name="Roesch P."/>
            <person name="Rasko D."/>
            <person name="Buckles E.L."/>
            <person name="Liou S.-R."/>
            <person name="Boutin A."/>
            <person name="Hackett J."/>
            <person name="Stroud D."/>
            <person name="Mayhew G.F."/>
            <person name="Rose D.J."/>
            <person name="Zhou S."/>
            <person name="Schwartz D.C."/>
            <person name="Perna N.T."/>
            <person name="Mobley H.L.T."/>
            <person name="Donnenberg M.S."/>
            <person name="Blattner F.R."/>
        </authorList>
    </citation>
    <scope>NUCLEOTIDE SEQUENCE [LARGE SCALE GENOMIC DNA]</scope>
    <source>
        <strain>CFT073 / ATCC 700928 / UPEC</strain>
    </source>
</reference>
<evidence type="ECO:0000250" key="1">
    <source>
        <dbReference type="UniProtKB" id="P0ABI4"/>
    </source>
</evidence>
<evidence type="ECO:0000250" key="2">
    <source>
        <dbReference type="UniProtKB" id="Q9WZ31"/>
    </source>
</evidence>
<evidence type="ECO:0000255" key="3"/>
<evidence type="ECO:0000305" key="4"/>
<gene>
    <name type="primary">corA</name>
    <name type="ordered locus">c4737</name>
</gene>